<sequence length="423" mass="48678">MERLISHPPLMIVSDLDHTMVDHQDHENLSLLRFNSLWEYAYRRDSLLVFSTARSPVLYKELRKEKPLLTPDIIITSIGTEIAFGNSMVPDHAWVESLNSCKWNREIVLEETSKFPELTLQPKTEQRLHKVSFYIDEGKGEALTKELSQLLEKRGLDVKIIYSWGKNVDVIPRGAGKGEALEYLLKKLQAEGIFPVNTLACGDSEHDAELFSIPDVHGVMVSNSQEELLKWRSENALNNLKVIHSTERCADGIIQAIGHFNLGPDLSPRDVSEFLDRKMDNVNPGHEVVRFYLFYERLRRGEIKNYETYIASFKDSCLHAAVLFHPSGAEKSLRDTIDELKKCYGDKRGKKFWVWVDQVLVTDTIPGKWIVKFDKWEQCEDESQCCKTTVEFTSKGGDLVWEKVKQIWSEESKVKDDNSSWIL</sequence>
<reference key="1">
    <citation type="journal article" date="2000" name="Proc. Natl. Acad. Sci. U.S.A.">
        <title>Purification, molecular cloning, and sequence analysis of sucrose-6F-phosphate phosphohydrolase from plants.</title>
        <authorList>
            <person name="Lunn J.E."/>
            <person name="Ashton A.R."/>
            <person name="Hatch M.D."/>
            <person name="Heldt H.W."/>
        </authorList>
    </citation>
    <scope>NUCLEOTIDE SEQUENCE [MRNA] (ISOFORM 1)</scope>
    <source>
        <strain>cv. Columbia</strain>
        <tissue>Seed</tissue>
    </source>
</reference>
<reference key="2">
    <citation type="journal article" date="2000" name="Nature">
        <title>Sequence and analysis of chromosome 3 of the plant Arabidopsis thaliana.</title>
        <authorList>
            <person name="Salanoubat M."/>
            <person name="Lemcke K."/>
            <person name="Rieger M."/>
            <person name="Ansorge W."/>
            <person name="Unseld M."/>
            <person name="Fartmann B."/>
            <person name="Valle G."/>
            <person name="Bloecker H."/>
            <person name="Perez-Alonso M."/>
            <person name="Obermaier B."/>
            <person name="Delseny M."/>
            <person name="Boutry M."/>
            <person name="Grivell L.A."/>
            <person name="Mache R."/>
            <person name="Puigdomenech P."/>
            <person name="De Simone V."/>
            <person name="Choisne N."/>
            <person name="Artiguenave F."/>
            <person name="Robert C."/>
            <person name="Brottier P."/>
            <person name="Wincker P."/>
            <person name="Cattolico L."/>
            <person name="Weissenbach J."/>
            <person name="Saurin W."/>
            <person name="Quetier F."/>
            <person name="Schaefer M."/>
            <person name="Mueller-Auer S."/>
            <person name="Gabel C."/>
            <person name="Fuchs M."/>
            <person name="Benes V."/>
            <person name="Wurmbach E."/>
            <person name="Drzonek H."/>
            <person name="Erfle H."/>
            <person name="Jordan N."/>
            <person name="Bangert S."/>
            <person name="Wiedelmann R."/>
            <person name="Kranz H."/>
            <person name="Voss H."/>
            <person name="Holland R."/>
            <person name="Brandt P."/>
            <person name="Nyakatura G."/>
            <person name="Vezzi A."/>
            <person name="D'Angelo M."/>
            <person name="Pallavicini A."/>
            <person name="Toppo S."/>
            <person name="Simionati B."/>
            <person name="Conrad A."/>
            <person name="Hornischer K."/>
            <person name="Kauer G."/>
            <person name="Loehnert T.-H."/>
            <person name="Nordsiek G."/>
            <person name="Reichelt J."/>
            <person name="Scharfe M."/>
            <person name="Schoen O."/>
            <person name="Bargues M."/>
            <person name="Terol J."/>
            <person name="Climent J."/>
            <person name="Navarro P."/>
            <person name="Collado C."/>
            <person name="Perez-Perez A."/>
            <person name="Ottenwaelder B."/>
            <person name="Duchemin D."/>
            <person name="Cooke R."/>
            <person name="Laudie M."/>
            <person name="Berger-Llauro C."/>
            <person name="Purnelle B."/>
            <person name="Masuy D."/>
            <person name="de Haan M."/>
            <person name="Maarse A.C."/>
            <person name="Alcaraz J.-P."/>
            <person name="Cottet A."/>
            <person name="Casacuberta E."/>
            <person name="Monfort A."/>
            <person name="Argiriou A."/>
            <person name="Flores M."/>
            <person name="Liguori R."/>
            <person name="Vitale D."/>
            <person name="Mannhaupt G."/>
            <person name="Haase D."/>
            <person name="Schoof H."/>
            <person name="Rudd S."/>
            <person name="Zaccaria P."/>
            <person name="Mewes H.-W."/>
            <person name="Mayer K.F.X."/>
            <person name="Kaul S."/>
            <person name="Town C.D."/>
            <person name="Koo H.L."/>
            <person name="Tallon L.J."/>
            <person name="Jenkins J."/>
            <person name="Rooney T."/>
            <person name="Rizzo M."/>
            <person name="Walts A."/>
            <person name="Utterback T."/>
            <person name="Fujii C.Y."/>
            <person name="Shea T.P."/>
            <person name="Creasy T.H."/>
            <person name="Haas B."/>
            <person name="Maiti R."/>
            <person name="Wu D."/>
            <person name="Peterson J."/>
            <person name="Van Aken S."/>
            <person name="Pai G."/>
            <person name="Militscher J."/>
            <person name="Sellers P."/>
            <person name="Gill J.E."/>
            <person name="Feldblyum T.V."/>
            <person name="Preuss D."/>
            <person name="Lin X."/>
            <person name="Nierman W.C."/>
            <person name="Salzberg S.L."/>
            <person name="White O."/>
            <person name="Venter J.C."/>
            <person name="Fraser C.M."/>
            <person name="Kaneko T."/>
            <person name="Nakamura Y."/>
            <person name="Sato S."/>
            <person name="Kato T."/>
            <person name="Asamizu E."/>
            <person name="Sasamoto S."/>
            <person name="Kimura T."/>
            <person name="Idesawa K."/>
            <person name="Kawashima K."/>
            <person name="Kishida Y."/>
            <person name="Kiyokawa C."/>
            <person name="Kohara M."/>
            <person name="Matsumoto M."/>
            <person name="Matsuno A."/>
            <person name="Muraki A."/>
            <person name="Nakayama S."/>
            <person name="Nakazaki N."/>
            <person name="Shinpo S."/>
            <person name="Takeuchi C."/>
            <person name="Wada T."/>
            <person name="Watanabe A."/>
            <person name="Yamada M."/>
            <person name="Yasuda M."/>
            <person name="Tabata S."/>
        </authorList>
    </citation>
    <scope>NUCLEOTIDE SEQUENCE [LARGE SCALE GENOMIC DNA]</scope>
    <source>
        <strain>cv. Columbia</strain>
    </source>
</reference>
<reference key="3">
    <citation type="journal article" date="2017" name="Plant J.">
        <title>Araport11: a complete reannotation of the Arabidopsis thaliana reference genome.</title>
        <authorList>
            <person name="Cheng C.Y."/>
            <person name="Krishnakumar V."/>
            <person name="Chan A.P."/>
            <person name="Thibaud-Nissen F."/>
            <person name="Schobel S."/>
            <person name="Town C.D."/>
        </authorList>
    </citation>
    <scope>GENOME REANNOTATION</scope>
    <source>
        <strain>cv. Columbia</strain>
    </source>
</reference>
<reference key="4">
    <citation type="journal article" date="2003" name="Science">
        <title>Empirical analysis of transcriptional activity in the Arabidopsis genome.</title>
        <authorList>
            <person name="Yamada K."/>
            <person name="Lim J."/>
            <person name="Dale J.M."/>
            <person name="Chen H."/>
            <person name="Shinn P."/>
            <person name="Palm C.J."/>
            <person name="Southwick A.M."/>
            <person name="Wu H.C."/>
            <person name="Kim C.J."/>
            <person name="Nguyen M."/>
            <person name="Pham P.K."/>
            <person name="Cheuk R.F."/>
            <person name="Karlin-Newmann G."/>
            <person name="Liu S.X."/>
            <person name="Lam B."/>
            <person name="Sakano H."/>
            <person name="Wu T."/>
            <person name="Yu G."/>
            <person name="Miranda M."/>
            <person name="Quach H.L."/>
            <person name="Tripp M."/>
            <person name="Chang C.H."/>
            <person name="Lee J.M."/>
            <person name="Toriumi M.J."/>
            <person name="Chan M.M."/>
            <person name="Tang C.C."/>
            <person name="Onodera C.S."/>
            <person name="Deng J.M."/>
            <person name="Akiyama K."/>
            <person name="Ansari Y."/>
            <person name="Arakawa T."/>
            <person name="Banh J."/>
            <person name="Banno F."/>
            <person name="Bowser L."/>
            <person name="Brooks S.Y."/>
            <person name="Carninci P."/>
            <person name="Chao Q."/>
            <person name="Choy N."/>
            <person name="Enju A."/>
            <person name="Goldsmith A.D."/>
            <person name="Gurjal M."/>
            <person name="Hansen N.F."/>
            <person name="Hayashizaki Y."/>
            <person name="Johnson-Hopson C."/>
            <person name="Hsuan V.W."/>
            <person name="Iida K."/>
            <person name="Karnes M."/>
            <person name="Khan S."/>
            <person name="Koesema E."/>
            <person name="Ishida J."/>
            <person name="Jiang P.X."/>
            <person name="Jones T."/>
            <person name="Kawai J."/>
            <person name="Kamiya A."/>
            <person name="Meyers C."/>
            <person name="Nakajima M."/>
            <person name="Narusaka M."/>
            <person name="Seki M."/>
            <person name="Sakurai T."/>
            <person name="Satou M."/>
            <person name="Tamse R."/>
            <person name="Vaysberg M."/>
            <person name="Wallender E.K."/>
            <person name="Wong C."/>
            <person name="Yamamura Y."/>
            <person name="Yuan S."/>
            <person name="Shinozaki K."/>
            <person name="Davis R.W."/>
            <person name="Theologis A."/>
            <person name="Ecker J.R."/>
        </authorList>
    </citation>
    <scope>NUCLEOTIDE SEQUENCE [LARGE SCALE MRNA] (ISOFORMS 1 AND 2)</scope>
    <source>
        <strain>cv. Columbia</strain>
    </source>
</reference>
<reference key="5">
    <citation type="submission" date="2004-09" db="EMBL/GenBank/DDBJ databases">
        <title>Large-scale analysis of RIKEN Arabidopsis full-length (RAFL) cDNAs.</title>
        <authorList>
            <person name="Totoki Y."/>
            <person name="Seki M."/>
            <person name="Ishida J."/>
            <person name="Nakajima M."/>
            <person name="Enju A."/>
            <person name="Kamiya A."/>
            <person name="Narusaka M."/>
            <person name="Shin-i T."/>
            <person name="Nakagawa M."/>
            <person name="Sakamoto N."/>
            <person name="Oishi K."/>
            <person name="Kohara Y."/>
            <person name="Kobayashi M."/>
            <person name="Toyoda A."/>
            <person name="Sakaki Y."/>
            <person name="Sakurai T."/>
            <person name="Iida K."/>
            <person name="Akiyama K."/>
            <person name="Satou M."/>
            <person name="Toyoda T."/>
            <person name="Konagaya A."/>
            <person name="Carninci P."/>
            <person name="Kawai J."/>
            <person name="Hayashizaki Y."/>
            <person name="Shinozaki K."/>
        </authorList>
    </citation>
    <scope>NUCLEOTIDE SEQUENCE [LARGE SCALE MRNA] (ISOFORM 1)</scope>
    <source>
        <strain>cv. Columbia</strain>
    </source>
</reference>
<reference key="6">
    <citation type="journal article" date="2003" name="Gene">
        <title>Sucrose-phosphatase gene families in plants.</title>
        <authorList>
            <person name="Lunn J.E."/>
        </authorList>
    </citation>
    <scope>GENE FAMILY</scope>
    <scope>NOMENCLATURE</scope>
</reference>
<protein>
    <recommendedName>
        <fullName>Probable sucrose-phosphatase 3b</fullName>
        <shortName>AtSPP3b</shortName>
        <ecNumber>3.1.3.24</ecNumber>
    </recommendedName>
</protein>
<organism>
    <name type="scientific">Arabidopsis thaliana</name>
    <name type="common">Mouse-ear cress</name>
    <dbReference type="NCBI Taxonomy" id="3702"/>
    <lineage>
        <taxon>Eukaryota</taxon>
        <taxon>Viridiplantae</taxon>
        <taxon>Streptophyta</taxon>
        <taxon>Embryophyta</taxon>
        <taxon>Tracheophyta</taxon>
        <taxon>Spermatophyta</taxon>
        <taxon>Magnoliopsida</taxon>
        <taxon>eudicotyledons</taxon>
        <taxon>Gunneridae</taxon>
        <taxon>Pentapetalae</taxon>
        <taxon>rosids</taxon>
        <taxon>malvids</taxon>
        <taxon>Brassicales</taxon>
        <taxon>Brassicaceae</taxon>
        <taxon>Camelineae</taxon>
        <taxon>Arabidopsis</taxon>
    </lineage>
</organism>
<gene>
    <name type="primary">SPP3B</name>
    <name type="synonym">SPP2</name>
    <name type="ordered locus">At3g52340</name>
    <name type="ORF">T25B15.110</name>
</gene>
<accession>Q93XN8</accession>
<accession>Q8RWS3</accession>
<accession>Q9FT48</accession>
<keyword id="KW-0025">Alternative splicing</keyword>
<keyword id="KW-0378">Hydrolase</keyword>
<keyword id="KW-0460">Magnesium</keyword>
<keyword id="KW-1185">Reference proteome</keyword>
<comment type="function">
    <text evidence="1">Catalyzes the final step of sucrose synthesis.</text>
</comment>
<comment type="catalytic activity">
    <reaction>
        <text>sucrose 6(F)-phosphate + H2O = sucrose + phosphate</text>
        <dbReference type="Rhea" id="RHEA:19289"/>
        <dbReference type="ChEBI" id="CHEBI:15377"/>
        <dbReference type="ChEBI" id="CHEBI:17992"/>
        <dbReference type="ChEBI" id="CHEBI:43474"/>
        <dbReference type="ChEBI" id="CHEBI:57723"/>
        <dbReference type="EC" id="3.1.3.24"/>
    </reaction>
</comment>
<comment type="cofactor">
    <cofactor evidence="1">
        <name>Mg(2+)</name>
        <dbReference type="ChEBI" id="CHEBI:18420"/>
    </cofactor>
</comment>
<comment type="pathway">
    <text>Glycan biosynthesis; sucrose biosynthesis; sucrose from D-fructose 6-phosphate and UDP-alpha-D-glucose: step 2/2.</text>
</comment>
<comment type="subunit">
    <text evidence="1">Homodimer.</text>
</comment>
<comment type="alternative products">
    <event type="alternative splicing"/>
    <isoform>
        <id>Q93XN8-1</id>
        <name>1</name>
        <sequence type="displayed"/>
    </isoform>
    <isoform>
        <id>Q93XN8-2</id>
        <name>2</name>
        <sequence type="described" ref="VSP_035433 VSP_035434"/>
    </isoform>
</comment>
<comment type="similarity">
    <text evidence="3">Belongs to the sucrose phosphatase family.</text>
</comment>
<comment type="sequence caution" evidence="3">
    <conflict type="erroneous gene model prediction">
        <sequence resource="EMBL-CDS" id="CAC07925"/>
    </conflict>
</comment>
<feature type="chain" id="PRO_0000350616" description="Probable sucrose-phosphatase 3b">
    <location>
        <begin position="1"/>
        <end position="423"/>
    </location>
</feature>
<feature type="splice variant" id="VSP_035433" description="In isoform 2." evidence="2">
    <location>
        <begin position="1"/>
        <end position="151"/>
    </location>
</feature>
<feature type="splice variant" id="VSP_035434" description="In isoform 2." evidence="2">
    <original>EKRG</original>
    <variation>MKVK</variation>
    <location>
        <begin position="152"/>
        <end position="155"/>
    </location>
</feature>
<dbReference type="EC" id="3.1.3.24"/>
<dbReference type="EMBL" id="AF356816">
    <property type="protein sequence ID" value="AAK40235.1"/>
    <property type="molecule type" value="mRNA"/>
</dbReference>
<dbReference type="EMBL" id="AL132972">
    <property type="protein sequence ID" value="CAC07925.1"/>
    <property type="status" value="ALT_SEQ"/>
    <property type="molecule type" value="Genomic_DNA"/>
</dbReference>
<dbReference type="EMBL" id="CP002686">
    <property type="protein sequence ID" value="AEE78934.1"/>
    <property type="molecule type" value="Genomic_DNA"/>
</dbReference>
<dbReference type="EMBL" id="CP002686">
    <property type="protein sequence ID" value="AEE78935.1"/>
    <property type="molecule type" value="Genomic_DNA"/>
</dbReference>
<dbReference type="EMBL" id="CP002686">
    <property type="protein sequence ID" value="AEE78936.1"/>
    <property type="molecule type" value="Genomic_DNA"/>
</dbReference>
<dbReference type="EMBL" id="CP002686">
    <property type="protein sequence ID" value="ANM64820.1"/>
    <property type="molecule type" value="Genomic_DNA"/>
</dbReference>
<dbReference type="EMBL" id="AY091146">
    <property type="protein sequence ID" value="AAM14095.1"/>
    <property type="molecule type" value="mRNA"/>
</dbReference>
<dbReference type="EMBL" id="BT000909">
    <property type="protein sequence ID" value="AAN41309.1"/>
    <property type="molecule type" value="mRNA"/>
</dbReference>
<dbReference type="EMBL" id="AK175395">
    <property type="protein sequence ID" value="BAD43158.1"/>
    <property type="molecule type" value="mRNA"/>
</dbReference>
<dbReference type="PIR" id="T46104">
    <property type="entry name" value="T46104"/>
</dbReference>
<dbReference type="RefSeq" id="NP_001030846.1">
    <molecule id="Q93XN8-1"/>
    <property type="nucleotide sequence ID" value="NM_001035769.3"/>
</dbReference>
<dbReference type="RefSeq" id="NP_001326825.1">
    <molecule id="Q93XN8-1"/>
    <property type="nucleotide sequence ID" value="NM_001339572.1"/>
</dbReference>
<dbReference type="RefSeq" id="NP_566964.1">
    <molecule id="Q93XN8-1"/>
    <property type="nucleotide sequence ID" value="NM_115094.4"/>
</dbReference>
<dbReference type="RefSeq" id="NP_974417.1">
    <molecule id="Q93XN8-1"/>
    <property type="nucleotide sequence ID" value="NM_202688.2"/>
</dbReference>
<dbReference type="SMR" id="Q93XN8"/>
<dbReference type="BioGRID" id="9717">
    <property type="interactions" value="1"/>
</dbReference>
<dbReference type="FunCoup" id="Q93XN8">
    <property type="interactions" value="181"/>
</dbReference>
<dbReference type="IntAct" id="Q93XN8">
    <property type="interactions" value="1"/>
</dbReference>
<dbReference type="STRING" id="3702.Q93XN8"/>
<dbReference type="iPTMnet" id="Q93XN8"/>
<dbReference type="PaxDb" id="3702-AT3G52340.3"/>
<dbReference type="ProteomicsDB" id="228292">
    <molecule id="Q93XN8-1"/>
</dbReference>
<dbReference type="EnsemblPlants" id="AT3G52340.1">
    <molecule id="Q93XN8-1"/>
    <property type="protein sequence ID" value="AT3G52340.1"/>
    <property type="gene ID" value="AT3G52340"/>
</dbReference>
<dbReference type="EnsemblPlants" id="AT3G52340.2">
    <molecule id="Q93XN8-1"/>
    <property type="protein sequence ID" value="AT3G52340.2"/>
    <property type="gene ID" value="AT3G52340"/>
</dbReference>
<dbReference type="EnsemblPlants" id="AT3G52340.3">
    <molecule id="Q93XN8-1"/>
    <property type="protein sequence ID" value="AT3G52340.3"/>
    <property type="gene ID" value="AT3G52340"/>
</dbReference>
<dbReference type="EnsemblPlants" id="AT3G52340.7">
    <molecule id="Q93XN8-1"/>
    <property type="protein sequence ID" value="AT3G52340.7"/>
    <property type="gene ID" value="AT3G52340"/>
</dbReference>
<dbReference type="GeneID" id="824399"/>
<dbReference type="Gramene" id="AT3G52340.1">
    <molecule id="Q93XN8-1"/>
    <property type="protein sequence ID" value="AT3G52340.1"/>
    <property type="gene ID" value="AT3G52340"/>
</dbReference>
<dbReference type="Gramene" id="AT3G52340.2">
    <molecule id="Q93XN8-1"/>
    <property type="protein sequence ID" value="AT3G52340.2"/>
    <property type="gene ID" value="AT3G52340"/>
</dbReference>
<dbReference type="Gramene" id="AT3G52340.3">
    <molecule id="Q93XN8-1"/>
    <property type="protein sequence ID" value="AT3G52340.3"/>
    <property type="gene ID" value="AT3G52340"/>
</dbReference>
<dbReference type="Gramene" id="AT3G52340.7">
    <molecule id="Q93XN8-1"/>
    <property type="protein sequence ID" value="AT3G52340.7"/>
    <property type="gene ID" value="AT3G52340"/>
</dbReference>
<dbReference type="KEGG" id="ath:AT3G52340"/>
<dbReference type="Araport" id="AT3G52340"/>
<dbReference type="TAIR" id="AT3G52340">
    <property type="gene designation" value="SPP2"/>
</dbReference>
<dbReference type="HOGENOM" id="CLU_030534_1_0_1"/>
<dbReference type="InParanoid" id="Q93XN8"/>
<dbReference type="OMA" id="NTDKWNR"/>
<dbReference type="OrthoDB" id="531008at2759"/>
<dbReference type="PhylomeDB" id="Q93XN8"/>
<dbReference type="BRENDA" id="3.1.3.24">
    <property type="organism ID" value="399"/>
</dbReference>
<dbReference type="UniPathway" id="UPA00371">
    <property type="reaction ID" value="UER00546"/>
</dbReference>
<dbReference type="PRO" id="PR:Q93XN8"/>
<dbReference type="Proteomes" id="UP000006548">
    <property type="component" value="Chromosome 3"/>
</dbReference>
<dbReference type="ExpressionAtlas" id="Q93XN8">
    <property type="expression patterns" value="baseline and differential"/>
</dbReference>
<dbReference type="GO" id="GO:0000287">
    <property type="term" value="F:magnesium ion binding"/>
    <property type="evidence" value="ECO:0007669"/>
    <property type="project" value="InterPro"/>
</dbReference>
<dbReference type="GO" id="GO:0050307">
    <property type="term" value="F:sucrose-phosphate phosphatase activity"/>
    <property type="evidence" value="ECO:0007669"/>
    <property type="project" value="UniProtKB-EC"/>
</dbReference>
<dbReference type="GO" id="GO:0005986">
    <property type="term" value="P:sucrose biosynthetic process"/>
    <property type="evidence" value="ECO:0007669"/>
    <property type="project" value="UniProtKB-UniPathway"/>
</dbReference>
<dbReference type="CDD" id="cd02605">
    <property type="entry name" value="HAD_SPP"/>
    <property type="match status" value="1"/>
</dbReference>
<dbReference type="FunFam" id="3.90.1070.10:FF:000002">
    <property type="entry name" value="Probable sucrose-phosphatase 1"/>
    <property type="match status" value="1"/>
</dbReference>
<dbReference type="FunFam" id="3.10.450.50:FF:000029">
    <property type="entry name" value="Probable sucrose-phosphatase 2"/>
    <property type="match status" value="1"/>
</dbReference>
<dbReference type="Gene3D" id="3.10.450.50">
    <property type="match status" value="1"/>
</dbReference>
<dbReference type="Gene3D" id="3.90.1070.10">
    <property type="match status" value="1"/>
</dbReference>
<dbReference type="Gene3D" id="3.40.50.1000">
    <property type="entry name" value="HAD superfamily/HAD-like"/>
    <property type="match status" value="1"/>
</dbReference>
<dbReference type="InterPro" id="IPR036412">
    <property type="entry name" value="HAD-like_sf"/>
</dbReference>
<dbReference type="InterPro" id="IPR006379">
    <property type="entry name" value="HAD-SF_hydro_IIB"/>
</dbReference>
<dbReference type="InterPro" id="IPR023214">
    <property type="entry name" value="HAD_sf"/>
</dbReference>
<dbReference type="InterPro" id="IPR032710">
    <property type="entry name" value="NTF2-like_dom_sf"/>
</dbReference>
<dbReference type="InterPro" id="IPR006380">
    <property type="entry name" value="SPP-like_dom"/>
</dbReference>
<dbReference type="InterPro" id="IPR013679">
    <property type="entry name" value="SPP_C"/>
</dbReference>
<dbReference type="InterPro" id="IPR051518">
    <property type="entry name" value="Sucrose_Phosphatase"/>
</dbReference>
<dbReference type="InterPro" id="IPR012847">
    <property type="entry name" value="Sucrose_phosphatase_pln/cyn"/>
</dbReference>
<dbReference type="NCBIfam" id="TIGR01484">
    <property type="entry name" value="HAD-SF-IIB"/>
    <property type="match status" value="1"/>
</dbReference>
<dbReference type="NCBIfam" id="TIGR01482">
    <property type="entry name" value="SPP-subfamily"/>
    <property type="match status" value="1"/>
</dbReference>
<dbReference type="NCBIfam" id="TIGR01485">
    <property type="entry name" value="SPP_plant-cyano"/>
    <property type="match status" value="1"/>
</dbReference>
<dbReference type="PANTHER" id="PTHR46521">
    <property type="entry name" value="SUCROSE-PHOSPHATASE 2-RELATED"/>
    <property type="match status" value="1"/>
</dbReference>
<dbReference type="PANTHER" id="PTHR46521:SF13">
    <property type="entry name" value="SUCROSE-PHOSPHATASE 3B-RELATED"/>
    <property type="match status" value="1"/>
</dbReference>
<dbReference type="Pfam" id="PF05116">
    <property type="entry name" value="S6PP"/>
    <property type="match status" value="1"/>
</dbReference>
<dbReference type="Pfam" id="PF08472">
    <property type="entry name" value="S6PP_C"/>
    <property type="match status" value="1"/>
</dbReference>
<dbReference type="SFLD" id="SFLDG01141">
    <property type="entry name" value="C2.B.1:_Sucrose_Phosphatase_Li"/>
    <property type="match status" value="1"/>
</dbReference>
<dbReference type="SFLD" id="SFLDF00043">
    <property type="entry name" value="sucrose-phosphatase"/>
    <property type="match status" value="1"/>
</dbReference>
<dbReference type="SUPFAM" id="SSF56784">
    <property type="entry name" value="HAD-like"/>
    <property type="match status" value="1"/>
</dbReference>
<dbReference type="SUPFAM" id="SSF54427">
    <property type="entry name" value="NTF2-like"/>
    <property type="match status" value="1"/>
</dbReference>
<proteinExistence type="evidence at transcript level"/>
<name>SPP3B_ARATH</name>
<evidence type="ECO:0000250" key="1"/>
<evidence type="ECO:0000303" key="2">
    <source>
    </source>
</evidence>
<evidence type="ECO:0000305" key="3"/>